<dbReference type="EMBL" id="EU926055">
    <property type="protein sequence ID" value="ACI41387.1"/>
    <property type="molecule type" value="mRNA"/>
</dbReference>
<dbReference type="EMBL" id="FM864059">
    <property type="protein sequence ID" value="CAS03656.1"/>
    <property type="molecule type" value="mRNA"/>
</dbReference>
<dbReference type="SMR" id="B6DCX1"/>
<dbReference type="ArachnoServer" id="AS000994">
    <property type="toxin name" value="U7-lycotoxin-Ls1c"/>
</dbReference>
<dbReference type="GO" id="GO:0005576">
    <property type="term" value="C:extracellular region"/>
    <property type="evidence" value="ECO:0007669"/>
    <property type="project" value="UniProtKB-SubCell"/>
</dbReference>
<dbReference type="GO" id="GO:0090729">
    <property type="term" value="F:toxin activity"/>
    <property type="evidence" value="ECO:0007669"/>
    <property type="project" value="UniProtKB-KW"/>
</dbReference>
<dbReference type="InterPro" id="IPR019553">
    <property type="entry name" value="Spider_toxin_CSTX_knottin"/>
</dbReference>
<dbReference type="Pfam" id="PF10530">
    <property type="entry name" value="Toxin_35"/>
    <property type="match status" value="1"/>
</dbReference>
<organism>
    <name type="scientific">Lycosa singoriensis</name>
    <name type="common">Wolf spider</name>
    <name type="synonym">Aranea singoriensis</name>
    <dbReference type="NCBI Taxonomy" id="434756"/>
    <lineage>
        <taxon>Eukaryota</taxon>
        <taxon>Metazoa</taxon>
        <taxon>Ecdysozoa</taxon>
        <taxon>Arthropoda</taxon>
        <taxon>Chelicerata</taxon>
        <taxon>Arachnida</taxon>
        <taxon>Araneae</taxon>
        <taxon>Araneomorphae</taxon>
        <taxon>Entelegynae</taxon>
        <taxon>Lycosoidea</taxon>
        <taxon>Lycosidae</taxon>
        <taxon>Lycosa</taxon>
    </lineage>
</organism>
<feature type="signal peptide" evidence="2">
    <location>
        <begin position="1"/>
        <end position="22"/>
    </location>
</feature>
<feature type="propeptide" id="PRO_0000401763" evidence="1">
    <location>
        <begin position="23"/>
        <end position="26"/>
    </location>
</feature>
<feature type="chain" id="PRO_0000401764" description="U7-lycotoxin-Ls1c">
    <location>
        <begin position="27"/>
        <end position="76"/>
    </location>
</feature>
<name>TX711_LYCSI</name>
<reference key="1">
    <citation type="journal article" date="2010" name="Zoology">
        <title>Transcriptome analysis of the venom glands of the Chinese wolf spider Lycosa singoriensis.</title>
        <authorList>
            <person name="Zhang Y."/>
            <person name="Chen J."/>
            <person name="Tang X."/>
            <person name="Wang F."/>
            <person name="Jiang L."/>
            <person name="Xiong X."/>
            <person name="Wang M."/>
            <person name="Rong M."/>
            <person name="Liu Z."/>
            <person name="Liang S."/>
        </authorList>
    </citation>
    <scope>NUCLEOTIDE SEQUENCE [LARGE SCALE MRNA]</scope>
    <source>
        <tissue>Venom gland</tissue>
    </source>
</reference>
<keyword id="KW-1015">Disulfide bond</keyword>
<keyword id="KW-0964">Secreted</keyword>
<keyword id="KW-0732">Signal</keyword>
<keyword id="KW-0800">Toxin</keyword>
<protein>
    <recommendedName>
        <fullName>U7-lycotoxin-Ls1c</fullName>
    </recommendedName>
    <alternativeName>
        <fullName>Toxin-like structure LSTX-G11</fullName>
    </alternativeName>
</protein>
<comment type="subcellular location">
    <subcellularLocation>
        <location evidence="1">Secreted</location>
    </subcellularLocation>
</comment>
<comment type="tissue specificity">
    <text>Expressed by the venom gland.</text>
</comment>
<comment type="PTM">
    <text evidence="1">Contains 4 disulfide bonds.</text>
</comment>
<comment type="similarity">
    <text evidence="3">Belongs to the neurotoxin 19 (CSTX) family. 07 (U7-Lctx) subfamily.</text>
</comment>
<accession>B6DCX1</accession>
<evidence type="ECO:0000250" key="1"/>
<evidence type="ECO:0000255" key="2"/>
<evidence type="ECO:0000305" key="3"/>
<sequence>MKLIIFTGLALFLLVSLIDVEAQNEGACIPHGSVCTTNHAGCCSKLSCDCYRRFEKGVEKGQKCWCIETGVTFSKE</sequence>
<proteinExistence type="evidence at transcript level"/>